<dbReference type="EC" id="4.1.1.15"/>
<dbReference type="EMBL" id="X76198">
    <property type="protein sequence ID" value="CAA53791.1"/>
    <property type="molecule type" value="mRNA"/>
</dbReference>
<dbReference type="EMBL" id="AE014296">
    <property type="protein sequence ID" value="AAF47834.1"/>
    <property type="molecule type" value="Genomic_DNA"/>
</dbReference>
<dbReference type="EMBL" id="AE014296">
    <property type="protein sequence ID" value="AAN11581.1"/>
    <property type="molecule type" value="Genomic_DNA"/>
</dbReference>
<dbReference type="EMBL" id="AE014296">
    <property type="protein sequence ID" value="AAN11582.1"/>
    <property type="molecule type" value="Genomic_DNA"/>
</dbReference>
<dbReference type="EMBL" id="AY089526">
    <property type="protein sequence ID" value="AAL90264.1"/>
    <property type="molecule type" value="mRNA"/>
</dbReference>
<dbReference type="PIR" id="JH0192">
    <property type="entry name" value="A30999"/>
</dbReference>
<dbReference type="RefSeq" id="NP_001261396.1">
    <property type="nucleotide sequence ID" value="NM_001274467.1"/>
</dbReference>
<dbReference type="RefSeq" id="NP_523914.2">
    <property type="nucleotide sequence ID" value="NM_079190.3"/>
</dbReference>
<dbReference type="RefSeq" id="NP_728930.1">
    <property type="nucleotide sequence ID" value="NM_168055.2"/>
</dbReference>
<dbReference type="RefSeq" id="NP_728931.1">
    <property type="nucleotide sequence ID" value="NM_168056.2"/>
</dbReference>
<dbReference type="SMR" id="P20228"/>
<dbReference type="BioGRID" id="63964">
    <property type="interactions" value="5"/>
</dbReference>
<dbReference type="FunCoup" id="P20228">
    <property type="interactions" value="362"/>
</dbReference>
<dbReference type="IntAct" id="P20228">
    <property type="interactions" value="1"/>
</dbReference>
<dbReference type="STRING" id="7227.FBpp0073131"/>
<dbReference type="PaxDb" id="7227-FBpp0073131"/>
<dbReference type="DNASU" id="38484"/>
<dbReference type="EnsemblMetazoa" id="FBtr0073275">
    <property type="protein sequence ID" value="FBpp0073131"/>
    <property type="gene ID" value="FBgn0004516"/>
</dbReference>
<dbReference type="EnsemblMetazoa" id="FBtr0073276">
    <property type="protein sequence ID" value="FBpp0073132"/>
    <property type="gene ID" value="FBgn0004516"/>
</dbReference>
<dbReference type="EnsemblMetazoa" id="FBtr0073277">
    <property type="protein sequence ID" value="FBpp0073133"/>
    <property type="gene ID" value="FBgn0004516"/>
</dbReference>
<dbReference type="EnsemblMetazoa" id="FBtr0332980">
    <property type="protein sequence ID" value="FBpp0305196"/>
    <property type="gene ID" value="FBgn0004516"/>
</dbReference>
<dbReference type="GeneID" id="38484"/>
<dbReference type="KEGG" id="dme:Dmel_CG14994"/>
<dbReference type="AGR" id="FB:FBgn0004516"/>
<dbReference type="CTD" id="2571"/>
<dbReference type="FlyBase" id="FBgn0004516">
    <property type="gene designation" value="Gad1"/>
</dbReference>
<dbReference type="VEuPathDB" id="VectorBase:FBgn0004516"/>
<dbReference type="eggNOG" id="KOG0629">
    <property type="taxonomic scope" value="Eukaryota"/>
</dbReference>
<dbReference type="GeneTree" id="ENSGT00940000170473"/>
<dbReference type="HOGENOM" id="CLU_011856_0_0_1"/>
<dbReference type="InParanoid" id="P20228"/>
<dbReference type="OMA" id="RHATYHA"/>
<dbReference type="OrthoDB" id="392571at2759"/>
<dbReference type="PhylomeDB" id="P20228"/>
<dbReference type="BRENDA" id="4.1.1.15">
    <property type="organism ID" value="1994"/>
</dbReference>
<dbReference type="Reactome" id="R-DME-888568">
    <property type="pathway name" value="GABA synthesis"/>
</dbReference>
<dbReference type="Reactome" id="R-DME-888590">
    <property type="pathway name" value="GABA synthesis, release, reuptake and degradation"/>
</dbReference>
<dbReference type="BioGRID-ORCS" id="38484">
    <property type="hits" value="0 hits in 3 CRISPR screens"/>
</dbReference>
<dbReference type="ChiTaRS" id="Gad1">
    <property type="organism name" value="fly"/>
</dbReference>
<dbReference type="GenomeRNAi" id="38484"/>
<dbReference type="PRO" id="PR:P20228"/>
<dbReference type="Proteomes" id="UP000000803">
    <property type="component" value="Chromosome 3L"/>
</dbReference>
<dbReference type="Bgee" id="FBgn0004516">
    <property type="expression patterns" value="Expressed in proximal medullary amacrine neuron Pm4 in brain and 93 other cell types or tissues"/>
</dbReference>
<dbReference type="ExpressionAtlas" id="P20228">
    <property type="expression patterns" value="baseline and differential"/>
</dbReference>
<dbReference type="GO" id="GO:0005737">
    <property type="term" value="C:cytoplasm"/>
    <property type="evidence" value="ECO:0000318"/>
    <property type="project" value="GO_Central"/>
</dbReference>
<dbReference type="GO" id="GO:0005829">
    <property type="term" value="C:cytosol"/>
    <property type="evidence" value="ECO:0007005"/>
    <property type="project" value="FlyBase"/>
</dbReference>
<dbReference type="GO" id="GO:0004351">
    <property type="term" value="F:glutamate decarboxylase activity"/>
    <property type="evidence" value="ECO:0000314"/>
    <property type="project" value="FlyBase"/>
</dbReference>
<dbReference type="GO" id="GO:0030170">
    <property type="term" value="F:pyridoxal phosphate binding"/>
    <property type="evidence" value="ECO:0007669"/>
    <property type="project" value="InterPro"/>
</dbReference>
<dbReference type="GO" id="GO:0009449">
    <property type="term" value="P:gamma-aminobutyric acid biosynthetic process"/>
    <property type="evidence" value="ECO:0000315"/>
    <property type="project" value="FlyBase"/>
</dbReference>
<dbReference type="GO" id="GO:0006538">
    <property type="term" value="P:glutamate catabolic process"/>
    <property type="evidence" value="ECO:0000315"/>
    <property type="project" value="FlyBase"/>
</dbReference>
<dbReference type="GO" id="GO:0008345">
    <property type="term" value="P:larval locomotory behavior"/>
    <property type="evidence" value="ECO:0000315"/>
    <property type="project" value="FlyBase"/>
</dbReference>
<dbReference type="GO" id="GO:0007528">
    <property type="term" value="P:neuromuscular junction development"/>
    <property type="evidence" value="ECO:0000315"/>
    <property type="project" value="FlyBase"/>
</dbReference>
<dbReference type="GO" id="GO:0008355">
    <property type="term" value="P:olfactory learning"/>
    <property type="evidence" value="ECO:0000315"/>
    <property type="project" value="FlyBase"/>
</dbReference>
<dbReference type="GO" id="GO:0009612">
    <property type="term" value="P:response to mechanical stimulus"/>
    <property type="evidence" value="ECO:0000316"/>
    <property type="project" value="FlyBase"/>
</dbReference>
<dbReference type="GO" id="GO:0007416">
    <property type="term" value="P:synapse assembly"/>
    <property type="evidence" value="ECO:0000315"/>
    <property type="project" value="FlyBase"/>
</dbReference>
<dbReference type="CDD" id="cd06450">
    <property type="entry name" value="DOPA_deC_like"/>
    <property type="match status" value="1"/>
</dbReference>
<dbReference type="FunFam" id="3.40.640.10:FF:000016">
    <property type="entry name" value="Glutamate decarboxylase like 1"/>
    <property type="match status" value="1"/>
</dbReference>
<dbReference type="Gene3D" id="3.90.1150.170">
    <property type="match status" value="1"/>
</dbReference>
<dbReference type="Gene3D" id="3.40.640.10">
    <property type="entry name" value="Type I PLP-dependent aspartate aminotransferase-like (Major domain)"/>
    <property type="match status" value="1"/>
</dbReference>
<dbReference type="InterPro" id="IPR002129">
    <property type="entry name" value="PyrdxlP-dep_de-COase"/>
</dbReference>
<dbReference type="InterPro" id="IPR015424">
    <property type="entry name" value="PyrdxlP-dep_Trfase"/>
</dbReference>
<dbReference type="InterPro" id="IPR015421">
    <property type="entry name" value="PyrdxlP-dep_Trfase_major"/>
</dbReference>
<dbReference type="InterPro" id="IPR021115">
    <property type="entry name" value="Pyridoxal-P_BS"/>
</dbReference>
<dbReference type="PANTHER" id="PTHR45677:SF10">
    <property type="entry name" value="GLUTAMATE DECARBOXYLASE"/>
    <property type="match status" value="1"/>
</dbReference>
<dbReference type="PANTHER" id="PTHR45677">
    <property type="entry name" value="GLUTAMATE DECARBOXYLASE-RELATED"/>
    <property type="match status" value="1"/>
</dbReference>
<dbReference type="Pfam" id="PF00282">
    <property type="entry name" value="Pyridoxal_deC"/>
    <property type="match status" value="1"/>
</dbReference>
<dbReference type="SUPFAM" id="SSF53383">
    <property type="entry name" value="PLP-dependent transferases"/>
    <property type="match status" value="1"/>
</dbReference>
<dbReference type="PROSITE" id="PS00392">
    <property type="entry name" value="DDC_GAD_HDC_YDC"/>
    <property type="match status" value="1"/>
</dbReference>
<proteinExistence type="evidence at protein level"/>
<keyword id="KW-0210">Decarboxylase</keyword>
<keyword id="KW-0456">Lyase</keyword>
<keyword id="KW-0530">Neurotransmitter biosynthesis</keyword>
<keyword id="KW-0663">Pyridoxal phosphate</keyword>
<keyword id="KW-1185">Reference proteome</keyword>
<comment type="function">
    <text evidence="6">Catalyzes the production of GABA.</text>
</comment>
<comment type="catalytic activity">
    <reaction>
        <text>L-glutamate + H(+) = 4-aminobutanoate + CO2</text>
        <dbReference type="Rhea" id="RHEA:17785"/>
        <dbReference type="ChEBI" id="CHEBI:15378"/>
        <dbReference type="ChEBI" id="CHEBI:16526"/>
        <dbReference type="ChEBI" id="CHEBI:29985"/>
        <dbReference type="ChEBI" id="CHEBI:59888"/>
        <dbReference type="EC" id="4.1.1.15"/>
    </reaction>
</comment>
<comment type="cofactor">
    <cofactor>
        <name>pyridoxal 5'-phosphate</name>
        <dbReference type="ChEBI" id="CHEBI:597326"/>
    </cofactor>
</comment>
<comment type="subunit">
    <text evidence="2">Homodimer.</text>
</comment>
<comment type="tissue specificity">
    <text evidence="3">Expressed in the head (at protein level).</text>
</comment>
<comment type="developmental stage">
    <text evidence="3">Expressed in early embryonic development (4-8 h) and in all later developmental stages.</text>
</comment>
<comment type="disruption phenotype">
    <text evidence="4">RNAi-mediated knockdown in 5-HT1B+ neurons leads to dis-inhibition of male aggressive behavior.</text>
</comment>
<comment type="similarity">
    <text evidence="5">Belongs to the group II decarboxylase family.</text>
</comment>
<sequence>MSLNPNGYKLSERTGKLTAYDLMPTTVTAGPETREFLLKVIDVLLDFVKATNDRNEKVLDFHHPEDMKRLLDLDVPDRALPLQQLIEDCATTLKYQVKTGHPHFFNQLSNGLDLISMAGEWLTATANTNMFTYEIAPVFILMENVVLTKMREIIGWSGGDSILAPGGSISNLYAFLAARHKMFPNYKEHGSVGLPGTLVMFTSDQCHYSIKSCAAVCGLGTDHCIVVPSDEHGKMITSELERLILERKAKGDIPFFVNATAGTTVLGAFDDINTIADICQKYNCWMHIDAAWGGGLLMSRKHRHPRFTGVERADSVTWNPHKLMGALLQCSTIHFKEDGLLISCNQMSAEYLFMTDKQYDISYDTGDKVIQCGRHNDIFKLWLQWRAKGTEGFEQQQDRLMELVQYQLKRIREQSDRFHLILEPECVNVSFWYVPKRLRGVPHDAKKEVELGKICPIIKGRMMQKGTLMVGYQPDDRRPNFFRSIISSAAVNEADVDFMLDEIHRLGDDL</sequence>
<reference key="1">
    <citation type="journal article" date="1990" name="J. Neurochem.">
        <title>Drosophila GABAergic systems: sequence and expression of glutamic acid decarboxylase.</title>
        <authorList>
            <person name="Jackson F.R."/>
            <person name="Newby L.M."/>
            <person name="Kulkarni S.J."/>
        </authorList>
    </citation>
    <scope>NUCLEOTIDE SEQUENCE [MRNA]</scope>
    <scope>TISSUE SPECIFICITY</scope>
    <scope>DEVELOPMENTAL STAGE</scope>
</reference>
<reference key="2">
    <citation type="journal article" date="2000" name="Science">
        <title>The genome sequence of Drosophila melanogaster.</title>
        <authorList>
            <person name="Adams M.D."/>
            <person name="Celniker S.E."/>
            <person name="Holt R.A."/>
            <person name="Evans C.A."/>
            <person name="Gocayne J.D."/>
            <person name="Amanatides P.G."/>
            <person name="Scherer S.E."/>
            <person name="Li P.W."/>
            <person name="Hoskins R.A."/>
            <person name="Galle R.F."/>
            <person name="George R.A."/>
            <person name="Lewis S.E."/>
            <person name="Richards S."/>
            <person name="Ashburner M."/>
            <person name="Henderson S.N."/>
            <person name="Sutton G.G."/>
            <person name="Wortman J.R."/>
            <person name="Yandell M.D."/>
            <person name="Zhang Q."/>
            <person name="Chen L.X."/>
            <person name="Brandon R.C."/>
            <person name="Rogers Y.-H.C."/>
            <person name="Blazej R.G."/>
            <person name="Champe M."/>
            <person name="Pfeiffer B.D."/>
            <person name="Wan K.H."/>
            <person name="Doyle C."/>
            <person name="Baxter E.G."/>
            <person name="Helt G."/>
            <person name="Nelson C.R."/>
            <person name="Miklos G.L.G."/>
            <person name="Abril J.F."/>
            <person name="Agbayani A."/>
            <person name="An H.-J."/>
            <person name="Andrews-Pfannkoch C."/>
            <person name="Baldwin D."/>
            <person name="Ballew R.M."/>
            <person name="Basu A."/>
            <person name="Baxendale J."/>
            <person name="Bayraktaroglu L."/>
            <person name="Beasley E.M."/>
            <person name="Beeson K.Y."/>
            <person name="Benos P.V."/>
            <person name="Berman B.P."/>
            <person name="Bhandari D."/>
            <person name="Bolshakov S."/>
            <person name="Borkova D."/>
            <person name="Botchan M.R."/>
            <person name="Bouck J."/>
            <person name="Brokstein P."/>
            <person name="Brottier P."/>
            <person name="Burtis K.C."/>
            <person name="Busam D.A."/>
            <person name="Butler H."/>
            <person name="Cadieu E."/>
            <person name="Center A."/>
            <person name="Chandra I."/>
            <person name="Cherry J.M."/>
            <person name="Cawley S."/>
            <person name="Dahlke C."/>
            <person name="Davenport L.B."/>
            <person name="Davies P."/>
            <person name="de Pablos B."/>
            <person name="Delcher A."/>
            <person name="Deng Z."/>
            <person name="Mays A.D."/>
            <person name="Dew I."/>
            <person name="Dietz S.M."/>
            <person name="Dodson K."/>
            <person name="Doup L.E."/>
            <person name="Downes M."/>
            <person name="Dugan-Rocha S."/>
            <person name="Dunkov B.C."/>
            <person name="Dunn P."/>
            <person name="Durbin K.J."/>
            <person name="Evangelista C.C."/>
            <person name="Ferraz C."/>
            <person name="Ferriera S."/>
            <person name="Fleischmann W."/>
            <person name="Fosler C."/>
            <person name="Gabrielian A.E."/>
            <person name="Garg N.S."/>
            <person name="Gelbart W.M."/>
            <person name="Glasser K."/>
            <person name="Glodek A."/>
            <person name="Gong F."/>
            <person name="Gorrell J.H."/>
            <person name="Gu Z."/>
            <person name="Guan P."/>
            <person name="Harris M."/>
            <person name="Harris N.L."/>
            <person name="Harvey D.A."/>
            <person name="Heiman T.J."/>
            <person name="Hernandez J.R."/>
            <person name="Houck J."/>
            <person name="Hostin D."/>
            <person name="Houston K.A."/>
            <person name="Howland T.J."/>
            <person name="Wei M.-H."/>
            <person name="Ibegwam C."/>
            <person name="Jalali M."/>
            <person name="Kalush F."/>
            <person name="Karpen G.H."/>
            <person name="Ke Z."/>
            <person name="Kennison J.A."/>
            <person name="Ketchum K.A."/>
            <person name="Kimmel B.E."/>
            <person name="Kodira C.D."/>
            <person name="Kraft C.L."/>
            <person name="Kravitz S."/>
            <person name="Kulp D."/>
            <person name="Lai Z."/>
            <person name="Lasko P."/>
            <person name="Lei Y."/>
            <person name="Levitsky A.A."/>
            <person name="Li J.H."/>
            <person name="Li Z."/>
            <person name="Liang Y."/>
            <person name="Lin X."/>
            <person name="Liu X."/>
            <person name="Mattei B."/>
            <person name="McIntosh T.C."/>
            <person name="McLeod M.P."/>
            <person name="McPherson D."/>
            <person name="Merkulov G."/>
            <person name="Milshina N.V."/>
            <person name="Mobarry C."/>
            <person name="Morris J."/>
            <person name="Moshrefi A."/>
            <person name="Mount S.M."/>
            <person name="Moy M."/>
            <person name="Murphy B."/>
            <person name="Murphy L."/>
            <person name="Muzny D.M."/>
            <person name="Nelson D.L."/>
            <person name="Nelson D.R."/>
            <person name="Nelson K.A."/>
            <person name="Nixon K."/>
            <person name="Nusskern D.R."/>
            <person name="Pacleb J.M."/>
            <person name="Palazzolo M."/>
            <person name="Pittman G.S."/>
            <person name="Pan S."/>
            <person name="Pollard J."/>
            <person name="Puri V."/>
            <person name="Reese M.G."/>
            <person name="Reinert K."/>
            <person name="Remington K."/>
            <person name="Saunders R.D.C."/>
            <person name="Scheeler F."/>
            <person name="Shen H."/>
            <person name="Shue B.C."/>
            <person name="Siden-Kiamos I."/>
            <person name="Simpson M."/>
            <person name="Skupski M.P."/>
            <person name="Smith T.J."/>
            <person name="Spier E."/>
            <person name="Spradling A.C."/>
            <person name="Stapleton M."/>
            <person name="Strong R."/>
            <person name="Sun E."/>
            <person name="Svirskas R."/>
            <person name="Tector C."/>
            <person name="Turner R."/>
            <person name="Venter E."/>
            <person name="Wang A.H."/>
            <person name="Wang X."/>
            <person name="Wang Z.-Y."/>
            <person name="Wassarman D.A."/>
            <person name="Weinstock G.M."/>
            <person name="Weissenbach J."/>
            <person name="Williams S.M."/>
            <person name="Woodage T."/>
            <person name="Worley K.C."/>
            <person name="Wu D."/>
            <person name="Yang S."/>
            <person name="Yao Q.A."/>
            <person name="Ye J."/>
            <person name="Yeh R.-F."/>
            <person name="Zaveri J.S."/>
            <person name="Zhan M."/>
            <person name="Zhang G."/>
            <person name="Zhao Q."/>
            <person name="Zheng L."/>
            <person name="Zheng X.H."/>
            <person name="Zhong F.N."/>
            <person name="Zhong W."/>
            <person name="Zhou X."/>
            <person name="Zhu S.C."/>
            <person name="Zhu X."/>
            <person name="Smith H.O."/>
            <person name="Gibbs R.A."/>
            <person name="Myers E.W."/>
            <person name="Rubin G.M."/>
            <person name="Venter J.C."/>
        </authorList>
    </citation>
    <scope>NUCLEOTIDE SEQUENCE [LARGE SCALE GENOMIC DNA]</scope>
    <source>
        <strain>Berkeley</strain>
    </source>
</reference>
<reference key="3">
    <citation type="journal article" date="2002" name="Genome Biol.">
        <title>Annotation of the Drosophila melanogaster euchromatic genome: a systematic review.</title>
        <authorList>
            <person name="Misra S."/>
            <person name="Crosby M.A."/>
            <person name="Mungall C.J."/>
            <person name="Matthews B.B."/>
            <person name="Campbell K.S."/>
            <person name="Hradecky P."/>
            <person name="Huang Y."/>
            <person name="Kaminker J.S."/>
            <person name="Millburn G.H."/>
            <person name="Prochnik S.E."/>
            <person name="Smith C.D."/>
            <person name="Tupy J.L."/>
            <person name="Whitfield E.J."/>
            <person name="Bayraktaroglu L."/>
            <person name="Berman B.P."/>
            <person name="Bettencourt B.R."/>
            <person name="Celniker S.E."/>
            <person name="de Grey A.D.N.J."/>
            <person name="Drysdale R.A."/>
            <person name="Harris N.L."/>
            <person name="Richter J."/>
            <person name="Russo S."/>
            <person name="Schroeder A.J."/>
            <person name="Shu S.Q."/>
            <person name="Stapleton M."/>
            <person name="Yamada C."/>
            <person name="Ashburner M."/>
            <person name="Gelbart W.M."/>
            <person name="Rubin G.M."/>
            <person name="Lewis S.E."/>
        </authorList>
    </citation>
    <scope>GENOME REANNOTATION</scope>
    <source>
        <strain>Berkeley</strain>
    </source>
</reference>
<reference key="4">
    <citation type="journal article" date="2002" name="Genome Biol.">
        <title>A Drosophila full-length cDNA resource.</title>
        <authorList>
            <person name="Stapleton M."/>
            <person name="Carlson J.W."/>
            <person name="Brokstein P."/>
            <person name="Yu C."/>
            <person name="Champe M."/>
            <person name="George R.A."/>
            <person name="Guarin H."/>
            <person name="Kronmiller B."/>
            <person name="Pacleb J.M."/>
            <person name="Park S."/>
            <person name="Wan K.H."/>
            <person name="Rubin G.M."/>
            <person name="Celniker S.E."/>
        </authorList>
    </citation>
    <scope>NUCLEOTIDE SEQUENCE [LARGE SCALE MRNA]</scope>
    <source>
        <strain>Berkeley</strain>
        <tissue>Head</tissue>
    </source>
</reference>
<reference key="5">
    <citation type="journal article" date="2014" name="Nat. Neurosci.">
        <title>Female contact modulates male aggression via a sexually dimorphic GABAergic circuit in Drosophila.</title>
        <authorList>
            <person name="Yuan Q."/>
            <person name="Song Y."/>
            <person name="Yang C.H."/>
            <person name="Jan L.Y."/>
            <person name="Jan Y.N."/>
        </authorList>
    </citation>
    <scope>DISRUPTION PHENOTYPE</scope>
</reference>
<name>DCE_DROME</name>
<evidence type="ECO:0000250" key="1"/>
<evidence type="ECO:0000250" key="2">
    <source>
        <dbReference type="UniProtKB" id="Q99259"/>
    </source>
</evidence>
<evidence type="ECO:0000269" key="3">
    <source>
    </source>
</evidence>
<evidence type="ECO:0000269" key="4">
    <source>
    </source>
</evidence>
<evidence type="ECO:0000305" key="5"/>
<evidence type="ECO:0000305" key="6">
    <source>
    </source>
</evidence>
<protein>
    <recommendedName>
        <fullName>Glutamate decarboxylase</fullName>
        <shortName>GAD</shortName>
        <ecNumber>4.1.1.15</ecNumber>
    </recommendedName>
</protein>
<feature type="chain" id="PRO_0000146972" description="Glutamate decarboxylase">
    <location>
        <begin position="1"/>
        <end position="510"/>
    </location>
</feature>
<feature type="binding site" evidence="1">
    <location>
        <begin position="107"/>
        <end position="109"/>
    </location>
    <ligand>
        <name>substrate</name>
    </ligand>
</feature>
<feature type="binding site" evidence="1">
    <location>
        <position position="483"/>
    </location>
    <ligand>
        <name>substrate</name>
    </ligand>
</feature>
<feature type="modified residue" description="N6-(pyridoxal phosphate)lysine" evidence="1">
    <location>
        <position position="322"/>
    </location>
</feature>
<feature type="sequence conflict" description="In Ref. 1; CAA53791." evidence="5" ref="1">
    <original>F</original>
    <variation>L</variation>
    <location>
        <position position="201"/>
    </location>
</feature>
<feature type="sequence conflict" description="In Ref. 1; CAA53791." evidence="5" ref="1">
    <original>K</original>
    <variation>T</variation>
    <location>
        <position position="301"/>
    </location>
</feature>
<gene>
    <name type="primary">Gad1</name>
    <name type="synonym">Gad</name>
    <name type="synonym">Glb</name>
    <name type="ORF">CG14994</name>
</gene>
<organism>
    <name type="scientific">Drosophila melanogaster</name>
    <name type="common">Fruit fly</name>
    <dbReference type="NCBI Taxonomy" id="7227"/>
    <lineage>
        <taxon>Eukaryota</taxon>
        <taxon>Metazoa</taxon>
        <taxon>Ecdysozoa</taxon>
        <taxon>Arthropoda</taxon>
        <taxon>Hexapoda</taxon>
        <taxon>Insecta</taxon>
        <taxon>Pterygota</taxon>
        <taxon>Neoptera</taxon>
        <taxon>Endopterygota</taxon>
        <taxon>Diptera</taxon>
        <taxon>Brachycera</taxon>
        <taxon>Muscomorpha</taxon>
        <taxon>Ephydroidea</taxon>
        <taxon>Drosophilidae</taxon>
        <taxon>Drosophila</taxon>
        <taxon>Sophophora</taxon>
    </lineage>
</organism>
<accession>P20228</accession>
<accession>A4V1G1</accession>
<accession>Q9VZI7</accession>